<evidence type="ECO:0000255" key="1">
    <source>
        <dbReference type="HAMAP-Rule" id="MF_01966"/>
    </source>
</evidence>
<keyword id="KW-0413">Isomerase</keyword>
<keyword id="KW-0479">Metal-binding</keyword>
<keyword id="KW-0520">NAD</keyword>
<keyword id="KW-0521">NADP</keyword>
<keyword id="KW-0547">Nucleotide-binding</keyword>
<keyword id="KW-0630">Potassium</keyword>
<dbReference type="EC" id="5.1.99.6" evidence="1"/>
<dbReference type="EMBL" id="CP001150">
    <property type="protein sequence ID" value="ACM01343.1"/>
    <property type="molecule type" value="Genomic_DNA"/>
</dbReference>
<dbReference type="RefSeq" id="WP_015920770.1">
    <property type="nucleotide sequence ID" value="NC_011963.1"/>
</dbReference>
<dbReference type="SMR" id="B9KJP6"/>
<dbReference type="GeneID" id="67446894"/>
<dbReference type="KEGG" id="rsk:RSKD131_1483"/>
<dbReference type="HOGENOM" id="CLU_024853_0_1_5"/>
<dbReference type="GO" id="GO:0046872">
    <property type="term" value="F:metal ion binding"/>
    <property type="evidence" value="ECO:0007669"/>
    <property type="project" value="UniProtKB-KW"/>
</dbReference>
<dbReference type="GO" id="GO:0052856">
    <property type="term" value="F:NAD(P)HX epimerase activity"/>
    <property type="evidence" value="ECO:0007669"/>
    <property type="project" value="UniProtKB-UniRule"/>
</dbReference>
<dbReference type="GO" id="GO:0000166">
    <property type="term" value="F:nucleotide binding"/>
    <property type="evidence" value="ECO:0007669"/>
    <property type="project" value="UniProtKB-KW"/>
</dbReference>
<dbReference type="Gene3D" id="3.40.50.10260">
    <property type="entry name" value="YjeF N-terminal domain"/>
    <property type="match status" value="1"/>
</dbReference>
<dbReference type="HAMAP" id="MF_01966">
    <property type="entry name" value="NADHX_epimerase"/>
    <property type="match status" value="1"/>
</dbReference>
<dbReference type="InterPro" id="IPR004443">
    <property type="entry name" value="YjeF_N_dom"/>
</dbReference>
<dbReference type="InterPro" id="IPR036652">
    <property type="entry name" value="YjeF_N_dom_sf"/>
</dbReference>
<dbReference type="NCBIfam" id="TIGR00197">
    <property type="entry name" value="yjeF_nterm"/>
    <property type="match status" value="1"/>
</dbReference>
<dbReference type="Pfam" id="PF03853">
    <property type="entry name" value="YjeF_N"/>
    <property type="match status" value="1"/>
</dbReference>
<dbReference type="SUPFAM" id="SSF64153">
    <property type="entry name" value="YjeF N-terminal domain-like"/>
    <property type="match status" value="1"/>
</dbReference>
<dbReference type="PROSITE" id="PS51385">
    <property type="entry name" value="YJEF_N"/>
    <property type="match status" value="1"/>
</dbReference>
<gene>
    <name evidence="1" type="primary">nnrE</name>
    <name type="ordered locus">RSKD131_1483</name>
</gene>
<sequence>MRAIENAAMAAGRATGLQLMERAGEAVAAAVPDWPAPRLAVVLCGPGNNGGDGFVVARLLAGRDWQVHVFASGWEAVFPELGPPGPVRAREGTDAVTNARRWRDEGGSCRPLTALAEVEAGRILVVDALLGIGQTRPCDDLLEPYWRARDGWDRAGAEVRTLSVDVPTGFDCDNGVALARRPFEADLVVSFHAEKPVHARLRAAGVTVAVADIGLSS</sequence>
<name>NNRE_CERSK</name>
<organism>
    <name type="scientific">Cereibacter sphaeroides (strain KD131 / KCTC 12085)</name>
    <name type="common">Rhodobacter sphaeroides</name>
    <dbReference type="NCBI Taxonomy" id="557760"/>
    <lineage>
        <taxon>Bacteria</taxon>
        <taxon>Pseudomonadati</taxon>
        <taxon>Pseudomonadota</taxon>
        <taxon>Alphaproteobacteria</taxon>
        <taxon>Rhodobacterales</taxon>
        <taxon>Paracoccaceae</taxon>
        <taxon>Cereibacter</taxon>
    </lineage>
</organism>
<accession>B9KJP6</accession>
<protein>
    <recommendedName>
        <fullName evidence="1">NAD(P)H-hydrate epimerase</fullName>
        <ecNumber evidence="1">5.1.99.6</ecNumber>
    </recommendedName>
    <alternativeName>
        <fullName evidence="1">NAD(P)HX epimerase</fullName>
    </alternativeName>
</protein>
<reference key="1">
    <citation type="journal article" date="2009" name="J. Bacteriol.">
        <title>Complete genome sequence of Rhodobacter sphaeroides KD131.</title>
        <authorList>
            <person name="Lim S.-K."/>
            <person name="Kim S.J."/>
            <person name="Cha S.H."/>
            <person name="Oh Y.-K."/>
            <person name="Rhee H.-J."/>
            <person name="Kim M.-S."/>
            <person name="Lee J.K."/>
        </authorList>
    </citation>
    <scope>NUCLEOTIDE SEQUENCE [LARGE SCALE GENOMIC DNA]</scope>
    <source>
        <strain>KD131 / KCTC 12085</strain>
    </source>
</reference>
<feature type="chain" id="PRO_0000416376" description="NAD(P)H-hydrate epimerase">
    <location>
        <begin position="1"/>
        <end position="217"/>
    </location>
</feature>
<feature type="domain" description="YjeF N-terminal" evidence="1">
    <location>
        <begin position="1"/>
        <end position="217"/>
    </location>
</feature>
<feature type="binding site" evidence="1">
    <location>
        <begin position="48"/>
        <end position="52"/>
    </location>
    <ligand>
        <name>(6S)-NADPHX</name>
        <dbReference type="ChEBI" id="CHEBI:64076"/>
    </ligand>
</feature>
<feature type="binding site" evidence="1">
    <location>
        <position position="49"/>
    </location>
    <ligand>
        <name>K(+)</name>
        <dbReference type="ChEBI" id="CHEBI:29103"/>
    </ligand>
</feature>
<feature type="binding site" evidence="1">
    <location>
        <position position="127"/>
    </location>
    <ligand>
        <name>K(+)</name>
        <dbReference type="ChEBI" id="CHEBI:29103"/>
    </ligand>
</feature>
<feature type="binding site" evidence="1">
    <location>
        <begin position="131"/>
        <end position="137"/>
    </location>
    <ligand>
        <name>(6S)-NADPHX</name>
        <dbReference type="ChEBI" id="CHEBI:64076"/>
    </ligand>
</feature>
<feature type="binding site" evidence="1">
    <location>
        <position position="165"/>
    </location>
    <ligand>
        <name>(6S)-NADPHX</name>
        <dbReference type="ChEBI" id="CHEBI:64076"/>
    </ligand>
</feature>
<feature type="binding site" evidence="1">
    <location>
        <position position="168"/>
    </location>
    <ligand>
        <name>K(+)</name>
        <dbReference type="ChEBI" id="CHEBI:29103"/>
    </ligand>
</feature>
<comment type="function">
    <text evidence="1">Catalyzes the epimerization of the S- and R-forms of NAD(P)HX, a damaged form of NAD(P)H that is a result of enzymatic or heat-dependent hydration. This is a prerequisite for the S-specific NAD(P)H-hydrate dehydratase to allow the repair of both epimers of NAD(P)HX.</text>
</comment>
<comment type="catalytic activity">
    <reaction evidence="1">
        <text>(6R)-NADHX = (6S)-NADHX</text>
        <dbReference type="Rhea" id="RHEA:32215"/>
        <dbReference type="ChEBI" id="CHEBI:64074"/>
        <dbReference type="ChEBI" id="CHEBI:64075"/>
        <dbReference type="EC" id="5.1.99.6"/>
    </reaction>
</comment>
<comment type="catalytic activity">
    <reaction evidence="1">
        <text>(6R)-NADPHX = (6S)-NADPHX</text>
        <dbReference type="Rhea" id="RHEA:32227"/>
        <dbReference type="ChEBI" id="CHEBI:64076"/>
        <dbReference type="ChEBI" id="CHEBI:64077"/>
        <dbReference type="EC" id="5.1.99.6"/>
    </reaction>
</comment>
<comment type="cofactor">
    <cofactor evidence="1">
        <name>K(+)</name>
        <dbReference type="ChEBI" id="CHEBI:29103"/>
    </cofactor>
    <text evidence="1">Binds 1 potassium ion per subunit.</text>
</comment>
<comment type="similarity">
    <text evidence="1">Belongs to the NnrE/AIBP family.</text>
</comment>
<proteinExistence type="inferred from homology"/>